<keyword id="KW-0963">Cytoplasm</keyword>
<keyword id="KW-0238">DNA-binding</keyword>
<keyword id="KW-0255">Endonuclease</keyword>
<keyword id="KW-0378">Hydrolase</keyword>
<keyword id="KW-0540">Nuclease</keyword>
<dbReference type="EC" id="3.1.-.-" evidence="1"/>
<dbReference type="EMBL" id="CP000605">
    <property type="protein sequence ID" value="ACD98567.1"/>
    <property type="molecule type" value="Genomic_DNA"/>
</dbReference>
<dbReference type="RefSeq" id="WP_007051476.1">
    <property type="nucleotide sequence ID" value="NZ_AABM02000027.1"/>
</dbReference>
<dbReference type="SMR" id="B3DTU8"/>
<dbReference type="GeneID" id="69577501"/>
<dbReference type="KEGG" id="blj:BLD_1121"/>
<dbReference type="HOGENOM" id="CLU_069350_0_1_11"/>
<dbReference type="Proteomes" id="UP000002419">
    <property type="component" value="Chromosome"/>
</dbReference>
<dbReference type="GO" id="GO:0005737">
    <property type="term" value="C:cytoplasm"/>
    <property type="evidence" value="ECO:0007669"/>
    <property type="project" value="UniProtKB-SubCell"/>
</dbReference>
<dbReference type="GO" id="GO:0003677">
    <property type="term" value="F:DNA binding"/>
    <property type="evidence" value="ECO:0007669"/>
    <property type="project" value="UniProtKB-KW"/>
</dbReference>
<dbReference type="GO" id="GO:0000014">
    <property type="term" value="F:single-stranded DNA endodeoxyribonuclease activity"/>
    <property type="evidence" value="ECO:0007669"/>
    <property type="project" value="UniProtKB-UniRule"/>
</dbReference>
<dbReference type="CDD" id="cd22341">
    <property type="entry name" value="NucS-like"/>
    <property type="match status" value="1"/>
</dbReference>
<dbReference type="Gene3D" id="2.70.180.20">
    <property type="match status" value="1"/>
</dbReference>
<dbReference type="Gene3D" id="3.40.1350.10">
    <property type="match status" value="1"/>
</dbReference>
<dbReference type="HAMAP" id="MF_00722">
    <property type="entry name" value="NucS"/>
    <property type="match status" value="1"/>
</dbReference>
<dbReference type="InterPro" id="IPR002793">
    <property type="entry name" value="Endonuclease_NucS"/>
</dbReference>
<dbReference type="InterPro" id="IPR048301">
    <property type="entry name" value="NucS_C"/>
</dbReference>
<dbReference type="InterPro" id="IPR048302">
    <property type="entry name" value="NucS_N"/>
</dbReference>
<dbReference type="InterPro" id="IPR049173">
    <property type="entry name" value="NucS_N_sf"/>
</dbReference>
<dbReference type="InterPro" id="IPR011856">
    <property type="entry name" value="tRNA_endonuc-like_dom_sf"/>
</dbReference>
<dbReference type="NCBIfam" id="NF002876">
    <property type="entry name" value="PRK03298.1"/>
    <property type="match status" value="1"/>
</dbReference>
<dbReference type="PANTHER" id="PTHR38814">
    <property type="entry name" value="ENDONUCLEASE NUCS"/>
    <property type="match status" value="1"/>
</dbReference>
<dbReference type="PANTHER" id="PTHR38814:SF1">
    <property type="entry name" value="ENDONUCLEASE NUCS"/>
    <property type="match status" value="1"/>
</dbReference>
<dbReference type="Pfam" id="PF01939">
    <property type="entry name" value="NucS_C"/>
    <property type="match status" value="1"/>
</dbReference>
<dbReference type="Pfam" id="PF21003">
    <property type="entry name" value="NucS_N"/>
    <property type="match status" value="1"/>
</dbReference>
<comment type="function">
    <text evidence="1">Cleaves both 3' and 5' ssDNA extremities of branched DNA structures.</text>
</comment>
<comment type="subcellular location">
    <subcellularLocation>
        <location evidence="1">Cytoplasm</location>
    </subcellularLocation>
</comment>
<comment type="similarity">
    <text evidence="1">Belongs to the NucS endonuclease family.</text>
</comment>
<gene>
    <name evidence="1" type="primary">nucS</name>
    <name type="ordered locus">BLD_1121</name>
</gene>
<name>NUCS_BIFLD</name>
<organism>
    <name type="scientific">Bifidobacterium longum (strain DJO10A)</name>
    <dbReference type="NCBI Taxonomy" id="205913"/>
    <lineage>
        <taxon>Bacteria</taxon>
        <taxon>Bacillati</taxon>
        <taxon>Actinomycetota</taxon>
        <taxon>Actinomycetes</taxon>
        <taxon>Bifidobacteriales</taxon>
        <taxon>Bifidobacteriaceae</taxon>
        <taxon>Bifidobacterium</taxon>
    </lineage>
</organism>
<feature type="chain" id="PRO_1000198195" description="Endonuclease NucS">
    <location>
        <begin position="1"/>
        <end position="256"/>
    </location>
</feature>
<feature type="region of interest" description="Disordered" evidence="2">
    <location>
        <begin position="62"/>
        <end position="97"/>
    </location>
</feature>
<sequence length="256" mass="27867">MRVIVADCSAEYSGRLNASLPLAKRVLLIKADSSLLIFSELGSYKPLNWMTAPCTIREIDPAAKSAQHSRESVAGGAVDGDSATHSPESVAAGEPEKVLRVSADKGSDILEVTLQHIYSDQTYDLGEDPGLIKDGVEDHLQRYLAEQIERIGKGAKLVRREYPTAIGPVDIMAVNAEGEHVAVEIKRHGGIDGVEQLTRYCELLNRDPLLAPVHGIFAAQTITPQAQVLAKDRGFTCLILDYDDMKGTEDDSLRLF</sequence>
<proteinExistence type="inferred from homology"/>
<protein>
    <recommendedName>
        <fullName evidence="1">Endonuclease NucS</fullName>
        <ecNumber evidence="1">3.1.-.-</ecNumber>
    </recommendedName>
</protein>
<evidence type="ECO:0000255" key="1">
    <source>
        <dbReference type="HAMAP-Rule" id="MF_00722"/>
    </source>
</evidence>
<evidence type="ECO:0000256" key="2">
    <source>
        <dbReference type="SAM" id="MobiDB-lite"/>
    </source>
</evidence>
<reference key="1">
    <citation type="journal article" date="2008" name="BMC Genomics">
        <title>Comparative genomic analysis of the gut bacterium Bifidobacterium longum reveals loci susceptible to deletion during pure culture growth.</title>
        <authorList>
            <person name="Lee J.H."/>
            <person name="Karamychev V.N."/>
            <person name="Kozyavkin S.A."/>
            <person name="Mills D."/>
            <person name="Pavlov A.R."/>
            <person name="Pavlova N.V."/>
            <person name="Polouchine N.N."/>
            <person name="Richardson P.M."/>
            <person name="Shakhova V.V."/>
            <person name="Slesarev A.I."/>
            <person name="Weimer B."/>
            <person name="O'Sullivan D.J."/>
        </authorList>
    </citation>
    <scope>NUCLEOTIDE SEQUENCE [LARGE SCALE GENOMIC DNA]</scope>
    <source>
        <strain>DJO10A</strain>
    </source>
</reference>
<accession>B3DTU8</accession>